<organism>
    <name type="scientific">Salmonella paratyphi B (strain ATCC BAA-1250 / SPB7)</name>
    <dbReference type="NCBI Taxonomy" id="1016998"/>
    <lineage>
        <taxon>Bacteria</taxon>
        <taxon>Pseudomonadati</taxon>
        <taxon>Pseudomonadota</taxon>
        <taxon>Gammaproteobacteria</taxon>
        <taxon>Enterobacterales</taxon>
        <taxon>Enterobacteriaceae</taxon>
        <taxon>Salmonella</taxon>
    </lineage>
</organism>
<evidence type="ECO:0000255" key="1">
    <source>
        <dbReference type="HAMAP-Rule" id="MF_00508"/>
    </source>
</evidence>
<evidence type="ECO:0000305" key="2"/>
<protein>
    <recommendedName>
        <fullName evidence="1">Small ribosomal subunit protein uS10</fullName>
    </recommendedName>
    <alternativeName>
        <fullName evidence="2">30S ribosomal protein S10</fullName>
    </alternativeName>
</protein>
<sequence length="103" mass="11767">MQNQRIRIRLKAFDHRLIDQSTAEIVETAKRTGAQVRGPIPLPTRKERFTVLISPHVNKDARDQYEIRTHKRLVDIVEPTEKTVDALMRLDLAAGVDVQISLG</sequence>
<keyword id="KW-0687">Ribonucleoprotein</keyword>
<keyword id="KW-0689">Ribosomal protein</keyword>
<accession>A9MT00</accession>
<feature type="chain" id="PRO_1000081566" description="Small ribosomal subunit protein uS10">
    <location>
        <begin position="1"/>
        <end position="103"/>
    </location>
</feature>
<name>RS10_SALPB</name>
<proteinExistence type="inferred from homology"/>
<comment type="function">
    <text evidence="1">Involved in the binding of tRNA to the ribosomes.</text>
</comment>
<comment type="subunit">
    <text evidence="1">Part of the 30S ribosomal subunit.</text>
</comment>
<comment type="similarity">
    <text evidence="1">Belongs to the universal ribosomal protein uS10 family.</text>
</comment>
<dbReference type="EMBL" id="CP000886">
    <property type="protein sequence ID" value="ABX69600.1"/>
    <property type="molecule type" value="Genomic_DNA"/>
</dbReference>
<dbReference type="RefSeq" id="WP_001181005.1">
    <property type="nucleotide sequence ID" value="NC_010102.1"/>
</dbReference>
<dbReference type="SMR" id="A9MT00"/>
<dbReference type="GeneID" id="98390443"/>
<dbReference type="KEGG" id="spq:SPAB_04283"/>
<dbReference type="PATRIC" id="fig|1016998.12.peg.4028"/>
<dbReference type="HOGENOM" id="CLU_122625_1_3_6"/>
<dbReference type="BioCyc" id="SENT1016998:SPAB_RS17440-MONOMER"/>
<dbReference type="Proteomes" id="UP000008556">
    <property type="component" value="Chromosome"/>
</dbReference>
<dbReference type="GO" id="GO:1990904">
    <property type="term" value="C:ribonucleoprotein complex"/>
    <property type="evidence" value="ECO:0007669"/>
    <property type="project" value="UniProtKB-KW"/>
</dbReference>
<dbReference type="GO" id="GO:0005840">
    <property type="term" value="C:ribosome"/>
    <property type="evidence" value="ECO:0007669"/>
    <property type="project" value="UniProtKB-KW"/>
</dbReference>
<dbReference type="GO" id="GO:0003735">
    <property type="term" value="F:structural constituent of ribosome"/>
    <property type="evidence" value="ECO:0007669"/>
    <property type="project" value="InterPro"/>
</dbReference>
<dbReference type="GO" id="GO:0000049">
    <property type="term" value="F:tRNA binding"/>
    <property type="evidence" value="ECO:0007669"/>
    <property type="project" value="UniProtKB-UniRule"/>
</dbReference>
<dbReference type="GO" id="GO:0006412">
    <property type="term" value="P:translation"/>
    <property type="evidence" value="ECO:0007669"/>
    <property type="project" value="UniProtKB-UniRule"/>
</dbReference>
<dbReference type="FunFam" id="3.30.70.600:FF:000001">
    <property type="entry name" value="30S ribosomal protein S10"/>
    <property type="match status" value="1"/>
</dbReference>
<dbReference type="Gene3D" id="3.30.70.600">
    <property type="entry name" value="Ribosomal protein S10 domain"/>
    <property type="match status" value="1"/>
</dbReference>
<dbReference type="HAMAP" id="MF_00508">
    <property type="entry name" value="Ribosomal_uS10"/>
    <property type="match status" value="1"/>
</dbReference>
<dbReference type="InterPro" id="IPR001848">
    <property type="entry name" value="Ribosomal_uS10"/>
</dbReference>
<dbReference type="InterPro" id="IPR018268">
    <property type="entry name" value="Ribosomal_uS10_CS"/>
</dbReference>
<dbReference type="InterPro" id="IPR027486">
    <property type="entry name" value="Ribosomal_uS10_dom"/>
</dbReference>
<dbReference type="InterPro" id="IPR036838">
    <property type="entry name" value="Ribosomal_uS10_dom_sf"/>
</dbReference>
<dbReference type="NCBIfam" id="NF001861">
    <property type="entry name" value="PRK00596.1"/>
    <property type="match status" value="1"/>
</dbReference>
<dbReference type="NCBIfam" id="TIGR01049">
    <property type="entry name" value="rpsJ_bact"/>
    <property type="match status" value="1"/>
</dbReference>
<dbReference type="PANTHER" id="PTHR11700">
    <property type="entry name" value="30S RIBOSOMAL PROTEIN S10 FAMILY MEMBER"/>
    <property type="match status" value="1"/>
</dbReference>
<dbReference type="Pfam" id="PF00338">
    <property type="entry name" value="Ribosomal_S10"/>
    <property type="match status" value="1"/>
</dbReference>
<dbReference type="PRINTS" id="PR00971">
    <property type="entry name" value="RIBOSOMALS10"/>
</dbReference>
<dbReference type="SMART" id="SM01403">
    <property type="entry name" value="Ribosomal_S10"/>
    <property type="match status" value="1"/>
</dbReference>
<dbReference type="SUPFAM" id="SSF54999">
    <property type="entry name" value="Ribosomal protein S10"/>
    <property type="match status" value="1"/>
</dbReference>
<dbReference type="PROSITE" id="PS00361">
    <property type="entry name" value="RIBOSOMAL_S10"/>
    <property type="match status" value="1"/>
</dbReference>
<gene>
    <name evidence="1" type="primary">rpsJ</name>
    <name type="ordered locus">SPAB_04283</name>
</gene>
<reference key="1">
    <citation type="submission" date="2007-11" db="EMBL/GenBank/DDBJ databases">
        <authorList>
            <consortium name="The Salmonella enterica serovar Paratyphi B Genome Sequencing Project"/>
            <person name="McClelland M."/>
            <person name="Sanderson E.K."/>
            <person name="Porwollik S."/>
            <person name="Spieth J."/>
            <person name="Clifton W.S."/>
            <person name="Fulton R."/>
            <person name="Cordes M."/>
            <person name="Wollam A."/>
            <person name="Shah N."/>
            <person name="Pepin K."/>
            <person name="Bhonagiri V."/>
            <person name="Nash W."/>
            <person name="Johnson M."/>
            <person name="Thiruvilangam P."/>
            <person name="Wilson R."/>
        </authorList>
    </citation>
    <scope>NUCLEOTIDE SEQUENCE [LARGE SCALE GENOMIC DNA]</scope>
    <source>
        <strain>ATCC BAA-1250 / SPB7</strain>
    </source>
</reference>